<keyword id="KW-0063">Aspartyl esterase</keyword>
<keyword id="KW-0134">Cell wall</keyword>
<keyword id="KW-0961">Cell wall biogenesis/degradation</keyword>
<keyword id="KW-0325">Glycoprotein</keyword>
<keyword id="KW-0378">Hydrolase</keyword>
<keyword id="KW-1185">Reference proteome</keyword>
<keyword id="KW-0964">Secreted</keyword>
<keyword id="KW-0732">Signal</keyword>
<organism>
    <name type="scientific">Arabidopsis thaliana</name>
    <name type="common">Mouse-ear cress</name>
    <dbReference type="NCBI Taxonomy" id="3702"/>
    <lineage>
        <taxon>Eukaryota</taxon>
        <taxon>Viridiplantae</taxon>
        <taxon>Streptophyta</taxon>
        <taxon>Embryophyta</taxon>
        <taxon>Tracheophyta</taxon>
        <taxon>Spermatophyta</taxon>
        <taxon>Magnoliopsida</taxon>
        <taxon>eudicotyledons</taxon>
        <taxon>Gunneridae</taxon>
        <taxon>Pentapetalae</taxon>
        <taxon>rosids</taxon>
        <taxon>malvids</taxon>
        <taxon>Brassicales</taxon>
        <taxon>Brassicaceae</taxon>
        <taxon>Camelineae</taxon>
        <taxon>Arabidopsis</taxon>
    </lineage>
</organism>
<evidence type="ECO:0000250" key="1"/>
<evidence type="ECO:0000255" key="2"/>
<evidence type="ECO:0000255" key="3">
    <source>
        <dbReference type="PROSITE-ProRule" id="PRU10040"/>
    </source>
</evidence>
<evidence type="ECO:0000269" key="4">
    <source>
    </source>
</evidence>
<evidence type="ECO:0000305" key="5"/>
<reference key="1">
    <citation type="journal article" date="1999" name="Nature">
        <title>Sequence and analysis of chromosome 4 of the plant Arabidopsis thaliana.</title>
        <authorList>
            <person name="Mayer K.F.X."/>
            <person name="Schueller C."/>
            <person name="Wambutt R."/>
            <person name="Murphy G."/>
            <person name="Volckaert G."/>
            <person name="Pohl T."/>
            <person name="Duesterhoeft A."/>
            <person name="Stiekema W."/>
            <person name="Entian K.-D."/>
            <person name="Terryn N."/>
            <person name="Harris B."/>
            <person name="Ansorge W."/>
            <person name="Brandt P."/>
            <person name="Grivell L.A."/>
            <person name="Rieger M."/>
            <person name="Weichselgartner M."/>
            <person name="de Simone V."/>
            <person name="Obermaier B."/>
            <person name="Mache R."/>
            <person name="Mueller M."/>
            <person name="Kreis M."/>
            <person name="Delseny M."/>
            <person name="Puigdomenech P."/>
            <person name="Watson M."/>
            <person name="Schmidtheini T."/>
            <person name="Reichert B."/>
            <person name="Portetelle D."/>
            <person name="Perez-Alonso M."/>
            <person name="Boutry M."/>
            <person name="Bancroft I."/>
            <person name="Vos P."/>
            <person name="Hoheisel J."/>
            <person name="Zimmermann W."/>
            <person name="Wedler H."/>
            <person name="Ridley P."/>
            <person name="Langham S.-A."/>
            <person name="McCullagh B."/>
            <person name="Bilham L."/>
            <person name="Robben J."/>
            <person name="van der Schueren J."/>
            <person name="Grymonprez B."/>
            <person name="Chuang Y.-J."/>
            <person name="Vandenbussche F."/>
            <person name="Braeken M."/>
            <person name="Weltjens I."/>
            <person name="Voet M."/>
            <person name="Bastiaens I."/>
            <person name="Aert R."/>
            <person name="Defoor E."/>
            <person name="Weitzenegger T."/>
            <person name="Bothe G."/>
            <person name="Ramsperger U."/>
            <person name="Hilbert H."/>
            <person name="Braun M."/>
            <person name="Holzer E."/>
            <person name="Brandt A."/>
            <person name="Peters S."/>
            <person name="van Staveren M."/>
            <person name="Dirkse W."/>
            <person name="Mooijman P."/>
            <person name="Klein Lankhorst R."/>
            <person name="Rose M."/>
            <person name="Hauf J."/>
            <person name="Koetter P."/>
            <person name="Berneiser S."/>
            <person name="Hempel S."/>
            <person name="Feldpausch M."/>
            <person name="Lamberth S."/>
            <person name="Van den Daele H."/>
            <person name="De Keyser A."/>
            <person name="Buysshaert C."/>
            <person name="Gielen J."/>
            <person name="Villarroel R."/>
            <person name="De Clercq R."/>
            <person name="van Montagu M."/>
            <person name="Rogers J."/>
            <person name="Cronin A."/>
            <person name="Quail M.A."/>
            <person name="Bray-Allen S."/>
            <person name="Clark L."/>
            <person name="Doggett J."/>
            <person name="Hall S."/>
            <person name="Kay M."/>
            <person name="Lennard N."/>
            <person name="McLay K."/>
            <person name="Mayes R."/>
            <person name="Pettett A."/>
            <person name="Rajandream M.A."/>
            <person name="Lyne M."/>
            <person name="Benes V."/>
            <person name="Rechmann S."/>
            <person name="Borkova D."/>
            <person name="Bloecker H."/>
            <person name="Scharfe M."/>
            <person name="Grimm M."/>
            <person name="Loehnert T.-H."/>
            <person name="Dose S."/>
            <person name="de Haan M."/>
            <person name="Maarse A.C."/>
            <person name="Schaefer M."/>
            <person name="Mueller-Auer S."/>
            <person name="Gabel C."/>
            <person name="Fuchs M."/>
            <person name="Fartmann B."/>
            <person name="Granderath K."/>
            <person name="Dauner D."/>
            <person name="Herzl A."/>
            <person name="Neumann S."/>
            <person name="Argiriou A."/>
            <person name="Vitale D."/>
            <person name="Liguori R."/>
            <person name="Piravandi E."/>
            <person name="Massenet O."/>
            <person name="Quigley F."/>
            <person name="Clabauld G."/>
            <person name="Muendlein A."/>
            <person name="Felber R."/>
            <person name="Schnabl S."/>
            <person name="Hiller R."/>
            <person name="Schmidt W."/>
            <person name="Lecharny A."/>
            <person name="Aubourg S."/>
            <person name="Chefdor F."/>
            <person name="Cooke R."/>
            <person name="Berger C."/>
            <person name="Monfort A."/>
            <person name="Casacuberta E."/>
            <person name="Gibbons T."/>
            <person name="Weber N."/>
            <person name="Vandenbol M."/>
            <person name="Bargues M."/>
            <person name="Terol J."/>
            <person name="Torres A."/>
            <person name="Perez-Perez A."/>
            <person name="Purnelle B."/>
            <person name="Bent E."/>
            <person name="Johnson S."/>
            <person name="Tacon D."/>
            <person name="Jesse T."/>
            <person name="Heijnen L."/>
            <person name="Schwarz S."/>
            <person name="Scholler P."/>
            <person name="Heber S."/>
            <person name="Francs P."/>
            <person name="Bielke C."/>
            <person name="Frishman D."/>
            <person name="Haase D."/>
            <person name="Lemcke K."/>
            <person name="Mewes H.-W."/>
            <person name="Stocker S."/>
            <person name="Zaccaria P."/>
            <person name="Bevan M."/>
            <person name="Wilson R.K."/>
            <person name="de la Bastide M."/>
            <person name="Habermann K."/>
            <person name="Parnell L."/>
            <person name="Dedhia N."/>
            <person name="Gnoj L."/>
            <person name="Schutz K."/>
            <person name="Huang E."/>
            <person name="Spiegel L."/>
            <person name="Sekhon M."/>
            <person name="Murray J."/>
            <person name="Sheet P."/>
            <person name="Cordes M."/>
            <person name="Abu-Threideh J."/>
            <person name="Stoneking T."/>
            <person name="Kalicki J."/>
            <person name="Graves T."/>
            <person name="Harmon G."/>
            <person name="Edwards J."/>
            <person name="Latreille P."/>
            <person name="Courtney L."/>
            <person name="Cloud J."/>
            <person name="Abbott A."/>
            <person name="Scott K."/>
            <person name="Johnson D."/>
            <person name="Minx P."/>
            <person name="Bentley D."/>
            <person name="Fulton B."/>
            <person name="Miller N."/>
            <person name="Greco T."/>
            <person name="Kemp K."/>
            <person name="Kramer J."/>
            <person name="Fulton L."/>
            <person name="Mardis E."/>
            <person name="Dante M."/>
            <person name="Pepin K."/>
            <person name="Hillier L.W."/>
            <person name="Nelson J."/>
            <person name="Spieth J."/>
            <person name="Ryan E."/>
            <person name="Andrews S."/>
            <person name="Geisel C."/>
            <person name="Layman D."/>
            <person name="Du H."/>
            <person name="Ali J."/>
            <person name="Berghoff A."/>
            <person name="Jones K."/>
            <person name="Drone K."/>
            <person name="Cotton M."/>
            <person name="Joshu C."/>
            <person name="Antonoiu B."/>
            <person name="Zidanic M."/>
            <person name="Strong C."/>
            <person name="Sun H."/>
            <person name="Lamar B."/>
            <person name="Yordan C."/>
            <person name="Ma P."/>
            <person name="Zhong J."/>
            <person name="Preston R."/>
            <person name="Vil D."/>
            <person name="Shekher M."/>
            <person name="Matero A."/>
            <person name="Shah R."/>
            <person name="Swaby I.K."/>
            <person name="O'Shaughnessy A."/>
            <person name="Rodriguez M."/>
            <person name="Hoffman J."/>
            <person name="Till S."/>
            <person name="Granat S."/>
            <person name="Shohdy N."/>
            <person name="Hasegawa A."/>
            <person name="Hameed A."/>
            <person name="Lodhi M."/>
            <person name="Johnson A."/>
            <person name="Chen E."/>
            <person name="Marra M.A."/>
            <person name="Martienssen R."/>
            <person name="McCombie W.R."/>
        </authorList>
    </citation>
    <scope>NUCLEOTIDE SEQUENCE [LARGE SCALE GENOMIC DNA]</scope>
    <source>
        <strain>cv. Columbia</strain>
    </source>
</reference>
<reference key="2">
    <citation type="journal article" date="2017" name="Plant J.">
        <title>Araport11: a complete reannotation of the Arabidopsis thaliana reference genome.</title>
        <authorList>
            <person name="Cheng C.Y."/>
            <person name="Krishnakumar V."/>
            <person name="Chan A.P."/>
            <person name="Thibaud-Nissen F."/>
            <person name="Schobel S."/>
            <person name="Town C.D."/>
        </authorList>
    </citation>
    <scope>GENOME REANNOTATION</scope>
    <source>
        <strain>cv. Columbia</strain>
    </source>
</reference>
<reference key="3">
    <citation type="submission" date="2005-05" db="EMBL/GenBank/DDBJ databases">
        <authorList>
            <person name="Underwood B.A."/>
            <person name="Xiao Y.-L."/>
            <person name="Moskal W.A. Jr."/>
            <person name="Monaghan E.L."/>
            <person name="Wang W."/>
            <person name="Redman J.C."/>
            <person name="Wu H.C."/>
            <person name="Utterback T."/>
            <person name="Town C.D."/>
        </authorList>
    </citation>
    <scope>NUCLEOTIDE SEQUENCE [LARGE SCALE MRNA]</scope>
    <source>
        <strain>cv. Columbia</strain>
    </source>
</reference>
<reference key="4">
    <citation type="journal article" date="2004" name="Carbohydr. Res.">
        <title>Pectin methylesterases: sequence-structural features and phylogenetic relationships.</title>
        <authorList>
            <person name="Markovic O."/>
            <person name="Janecek S."/>
        </authorList>
    </citation>
    <scope>GENE FAMILY</scope>
    <scope>NOMENCLATURE</scope>
</reference>
<reference key="5">
    <citation type="journal article" date="2006" name="Planta">
        <title>Comprehensive expression profiling of the pectin methylesterase gene family during silique development in Arabidopsis thaliana.</title>
        <authorList>
            <person name="Louvet R."/>
            <person name="Cavel E."/>
            <person name="Gutierrez L."/>
            <person name="Guenin S."/>
            <person name="Roger D."/>
            <person name="Gillet F."/>
            <person name="Guerineau F."/>
            <person name="Pelloux J."/>
        </authorList>
    </citation>
    <scope>TISSUE SPECIFICITY</scope>
    <scope>DEVELOPMENTAL STAGE</scope>
</reference>
<gene>
    <name type="primary">PME39</name>
    <name type="synonym">ARATH39</name>
    <name type="ordered locus">At4g02300</name>
    <name type="ORF">T2H3.6</name>
</gene>
<proteinExistence type="evidence at transcript level"/>
<sequence>MINNHPIREKPKHIIFNLLSLIFFLIFLSTVVSSQSPSYTTHKTQRLTETKTIPELIIADLNLTILKVNLASSNFSDLQTRLFPNLTHYERCAFEDCLGLLDDTISDLETAVSDLRSSSLEFNDISMLLTNVMTYQDTCLDGFSTSDNENNNDMTYELPENLKEIILDISNNLSNSLHMLQVISRKKPSPKSSEVDVEYPSWLSENDQRLLEAPVQETNYNLSVAIDGTGNFTTINDAVFAAPNMSETRFIIYIKGGEYFENVELPKKKTMIMFIGDGIGKTVIKANRSRIDGWSTFQTPTVGVKGKGYIAKDISFVNSAGPAKAQAVAFRSGSDHSAFYRCEFDGYQDTLYVHSAKQFYRECDIYGTIDFIFGNAAVVFQNSSLYARKPNPGHKIAFTAQSRNQSDQPTGISILNCRILAAPDLIPVKENFKAYLGRPWRKYSRTVIIKSFIDDLIHPAGWLEGKKDFALETLYYGEYMNEGPGANMAKRVTWPGFRRIENQTEATQFTVGPFIDGSTWLNSTGIPFSLGF</sequence>
<feature type="signal peptide" evidence="2">
    <location>
        <begin position="1"/>
        <end position="34"/>
    </location>
</feature>
<feature type="chain" id="PRO_0000371689" description="Probable pectinesterase/pectinesterase inhibitor 39">
    <location>
        <begin position="35"/>
        <end position="532"/>
    </location>
</feature>
<feature type="region of interest" description="Pectinesterase inhibitor 39">
    <location>
        <begin position="35"/>
        <end position="169"/>
    </location>
</feature>
<feature type="region of interest" description="Pectinesterase 39">
    <location>
        <begin position="221"/>
        <end position="518"/>
    </location>
</feature>
<feature type="active site" description="Proton donor; for pectinesterase activity" evidence="3">
    <location>
        <position position="349"/>
    </location>
</feature>
<feature type="active site" description="Nucleophile; for pectinesterase activity" evidence="3">
    <location>
        <position position="370"/>
    </location>
</feature>
<feature type="binding site" evidence="1">
    <location>
        <position position="296"/>
    </location>
    <ligand>
        <name>substrate</name>
        <note>for pectinesterase activity</note>
    </ligand>
</feature>
<feature type="binding site" evidence="1">
    <location>
        <position position="326"/>
    </location>
    <ligand>
        <name>substrate</name>
        <note>for pectinesterase activity</note>
    </ligand>
</feature>
<feature type="binding site" evidence="1">
    <location>
        <position position="438"/>
    </location>
    <ligand>
        <name>substrate</name>
        <note>for pectinesterase activity</note>
    </ligand>
</feature>
<feature type="binding site" evidence="1">
    <location>
        <position position="440"/>
    </location>
    <ligand>
        <name>substrate</name>
        <note>for pectinesterase activity</note>
    </ligand>
</feature>
<feature type="site" description="Transition state stabilizer" evidence="1">
    <location>
        <position position="348"/>
    </location>
</feature>
<feature type="glycosylation site" description="N-linked (GlcNAc...) asparagine" evidence="2">
    <location>
        <position position="62"/>
    </location>
</feature>
<feature type="glycosylation site" description="N-linked (GlcNAc...) asparagine" evidence="2">
    <location>
        <position position="74"/>
    </location>
</feature>
<feature type="glycosylation site" description="N-linked (GlcNAc...) asparagine" evidence="2">
    <location>
        <position position="85"/>
    </location>
</feature>
<feature type="glycosylation site" description="N-linked (GlcNAc...) asparagine" evidence="2">
    <location>
        <position position="172"/>
    </location>
</feature>
<feature type="glycosylation site" description="N-linked (GlcNAc...) asparagine" evidence="2">
    <location>
        <position position="221"/>
    </location>
</feature>
<feature type="glycosylation site" description="N-linked (GlcNAc...) asparagine" evidence="2">
    <location>
        <position position="231"/>
    </location>
</feature>
<feature type="glycosylation site" description="N-linked (GlcNAc...) asparagine" evidence="2">
    <location>
        <position position="244"/>
    </location>
</feature>
<feature type="glycosylation site" description="N-linked (GlcNAc...) asparagine" evidence="2">
    <location>
        <position position="287"/>
    </location>
</feature>
<feature type="glycosylation site" description="N-linked (GlcNAc...) asparagine" evidence="2">
    <location>
        <position position="382"/>
    </location>
</feature>
<feature type="glycosylation site" description="N-linked (GlcNAc...) asparagine" evidence="2">
    <location>
        <position position="404"/>
    </location>
</feature>
<feature type="glycosylation site" description="N-linked (GlcNAc...) asparagine" evidence="2">
    <location>
        <position position="502"/>
    </location>
</feature>
<feature type="glycosylation site" description="N-linked (GlcNAc...) asparagine" evidence="2">
    <location>
        <position position="522"/>
    </location>
</feature>
<dbReference type="EC" id="3.1.1.11"/>
<dbReference type="EMBL" id="AF075597">
    <property type="protein sequence ID" value="AAC28174.1"/>
    <property type="molecule type" value="Genomic_DNA"/>
</dbReference>
<dbReference type="EMBL" id="AL161494">
    <property type="protein sequence ID" value="CAB80723.1"/>
    <property type="molecule type" value="Genomic_DNA"/>
</dbReference>
<dbReference type="EMBL" id="CP002687">
    <property type="protein sequence ID" value="AEE82152.1"/>
    <property type="molecule type" value="Genomic_DNA"/>
</dbReference>
<dbReference type="EMBL" id="DQ056637">
    <property type="protein sequence ID" value="AAY78785.1"/>
    <property type="molecule type" value="mRNA"/>
</dbReference>
<dbReference type="PIR" id="T01418">
    <property type="entry name" value="T01418"/>
</dbReference>
<dbReference type="RefSeq" id="NP_192139.1">
    <property type="nucleotide sequence ID" value="NM_116463.2"/>
</dbReference>
<dbReference type="SMR" id="O81415"/>
<dbReference type="FunCoup" id="O81415">
    <property type="interactions" value="157"/>
</dbReference>
<dbReference type="STRING" id="3702.O81415"/>
<dbReference type="GlyCosmos" id="O81415">
    <property type="glycosylation" value="12 sites, No reported glycans"/>
</dbReference>
<dbReference type="GlyGen" id="O81415">
    <property type="glycosylation" value="12 sites"/>
</dbReference>
<dbReference type="iPTMnet" id="O81415"/>
<dbReference type="PaxDb" id="3702-AT4G02300.1"/>
<dbReference type="ProteomicsDB" id="226186"/>
<dbReference type="EnsemblPlants" id="AT4G02300.1">
    <property type="protein sequence ID" value="AT4G02300.1"/>
    <property type="gene ID" value="AT4G02300"/>
</dbReference>
<dbReference type="GeneID" id="827708"/>
<dbReference type="Gramene" id="AT4G02300.1">
    <property type="protein sequence ID" value="AT4G02300.1"/>
    <property type="gene ID" value="AT4G02300"/>
</dbReference>
<dbReference type="KEGG" id="ath:AT4G02300"/>
<dbReference type="Araport" id="AT4G02300"/>
<dbReference type="TAIR" id="AT4G02300">
    <property type="gene designation" value="PME39"/>
</dbReference>
<dbReference type="eggNOG" id="ENOG502QVXG">
    <property type="taxonomic scope" value="Eukaryota"/>
</dbReference>
<dbReference type="HOGENOM" id="CLU_012243_9_1_1"/>
<dbReference type="InParanoid" id="O81415"/>
<dbReference type="OMA" id="THYERCA"/>
<dbReference type="PhylomeDB" id="O81415"/>
<dbReference type="BioCyc" id="ARA:AT4G02300-MONOMER"/>
<dbReference type="UniPathway" id="UPA00545">
    <property type="reaction ID" value="UER00823"/>
</dbReference>
<dbReference type="PRO" id="PR:O81415"/>
<dbReference type="Proteomes" id="UP000006548">
    <property type="component" value="Chromosome 4"/>
</dbReference>
<dbReference type="ExpressionAtlas" id="O81415">
    <property type="expression patterns" value="baseline and differential"/>
</dbReference>
<dbReference type="GO" id="GO:0005576">
    <property type="term" value="C:extracellular region"/>
    <property type="evidence" value="ECO:0007669"/>
    <property type="project" value="UniProtKB-KW"/>
</dbReference>
<dbReference type="GO" id="GO:0004857">
    <property type="term" value="F:enzyme inhibitor activity"/>
    <property type="evidence" value="ECO:0007669"/>
    <property type="project" value="InterPro"/>
</dbReference>
<dbReference type="GO" id="GO:0030599">
    <property type="term" value="F:pectinesterase activity"/>
    <property type="evidence" value="ECO:0007669"/>
    <property type="project" value="UniProtKB-EC"/>
</dbReference>
<dbReference type="GO" id="GO:0042545">
    <property type="term" value="P:cell wall modification"/>
    <property type="evidence" value="ECO:0007669"/>
    <property type="project" value="InterPro"/>
</dbReference>
<dbReference type="GO" id="GO:0050829">
    <property type="term" value="P:defense response to Gram-negative bacterium"/>
    <property type="evidence" value="ECO:0000315"/>
    <property type="project" value="TAIR"/>
</dbReference>
<dbReference type="GO" id="GO:0045490">
    <property type="term" value="P:pectin catabolic process"/>
    <property type="evidence" value="ECO:0007669"/>
    <property type="project" value="UniProtKB-UniPathway"/>
</dbReference>
<dbReference type="CDD" id="cd15798">
    <property type="entry name" value="PMEI-like_3"/>
    <property type="match status" value="1"/>
</dbReference>
<dbReference type="FunFam" id="2.160.20.10:FF:000001">
    <property type="entry name" value="Pectinesterase"/>
    <property type="match status" value="1"/>
</dbReference>
<dbReference type="Gene3D" id="1.20.140.40">
    <property type="entry name" value="Invertase/pectin methylesterase inhibitor family protein"/>
    <property type="match status" value="1"/>
</dbReference>
<dbReference type="Gene3D" id="2.160.20.10">
    <property type="entry name" value="Single-stranded right-handed beta-helix, Pectin lyase-like"/>
    <property type="match status" value="1"/>
</dbReference>
<dbReference type="InterPro" id="IPR035513">
    <property type="entry name" value="Invertase/methylesterase_inhib"/>
</dbReference>
<dbReference type="InterPro" id="IPR012334">
    <property type="entry name" value="Pectin_lyas_fold"/>
</dbReference>
<dbReference type="InterPro" id="IPR011050">
    <property type="entry name" value="Pectin_lyase_fold/virulence"/>
</dbReference>
<dbReference type="InterPro" id="IPR033131">
    <property type="entry name" value="Pectinesterase_Asp_AS"/>
</dbReference>
<dbReference type="InterPro" id="IPR000070">
    <property type="entry name" value="Pectinesterase_cat"/>
</dbReference>
<dbReference type="InterPro" id="IPR006501">
    <property type="entry name" value="Pectinesterase_inhib_dom"/>
</dbReference>
<dbReference type="NCBIfam" id="TIGR01614">
    <property type="entry name" value="PME_inhib"/>
    <property type="match status" value="1"/>
</dbReference>
<dbReference type="PANTHER" id="PTHR31707">
    <property type="entry name" value="PECTINESTERASE"/>
    <property type="match status" value="1"/>
</dbReference>
<dbReference type="Pfam" id="PF01095">
    <property type="entry name" value="Pectinesterase"/>
    <property type="match status" value="1"/>
</dbReference>
<dbReference type="Pfam" id="PF04043">
    <property type="entry name" value="PMEI"/>
    <property type="match status" value="1"/>
</dbReference>
<dbReference type="SMART" id="SM00856">
    <property type="entry name" value="PMEI"/>
    <property type="match status" value="1"/>
</dbReference>
<dbReference type="SUPFAM" id="SSF51126">
    <property type="entry name" value="Pectin lyase-like"/>
    <property type="match status" value="1"/>
</dbReference>
<dbReference type="SUPFAM" id="SSF101148">
    <property type="entry name" value="Plant invertase/pectin methylesterase inhibitor"/>
    <property type="match status" value="1"/>
</dbReference>
<dbReference type="PROSITE" id="PS00503">
    <property type="entry name" value="PECTINESTERASE_2"/>
    <property type="match status" value="1"/>
</dbReference>
<accession>O81415</accession>
<name>PME39_ARATH</name>
<protein>
    <recommendedName>
        <fullName>Probable pectinesterase/pectinesterase inhibitor 39</fullName>
    </recommendedName>
    <domain>
        <recommendedName>
            <fullName>Pectinesterase inhibitor 39</fullName>
        </recommendedName>
        <alternativeName>
            <fullName>Pectin methylesterase inhibitor 39</fullName>
        </alternativeName>
    </domain>
    <domain>
        <recommendedName>
            <fullName>Pectinesterase 39</fullName>
            <shortName>PE 39</shortName>
            <ecNumber>3.1.1.11</ecNumber>
        </recommendedName>
        <alternativeName>
            <fullName>Pectin methylesterase 39</fullName>
            <shortName>AtPME39</shortName>
        </alternativeName>
    </domain>
</protein>
<comment type="function">
    <text evidence="1">Acts in the modification of cell walls via demethylesterification of cell wall pectin.</text>
</comment>
<comment type="catalytic activity">
    <reaction>
        <text>[(1-&gt;4)-alpha-D-galacturonosyl methyl ester](n) + n H2O = [(1-&gt;4)-alpha-D-galacturonosyl](n) + n methanol + n H(+)</text>
        <dbReference type="Rhea" id="RHEA:22380"/>
        <dbReference type="Rhea" id="RHEA-COMP:14570"/>
        <dbReference type="Rhea" id="RHEA-COMP:14573"/>
        <dbReference type="ChEBI" id="CHEBI:15377"/>
        <dbReference type="ChEBI" id="CHEBI:15378"/>
        <dbReference type="ChEBI" id="CHEBI:17790"/>
        <dbReference type="ChEBI" id="CHEBI:140522"/>
        <dbReference type="ChEBI" id="CHEBI:140523"/>
        <dbReference type="EC" id="3.1.1.11"/>
    </reaction>
</comment>
<comment type="pathway">
    <text>Glycan metabolism; pectin degradation; 2-dehydro-3-deoxy-D-gluconate from pectin: step 1/5.</text>
</comment>
<comment type="subcellular location">
    <subcellularLocation>
        <location evidence="1">Secreted</location>
        <location evidence="1">Cell wall</location>
    </subcellularLocation>
</comment>
<comment type="tissue specificity">
    <text evidence="4">Expressed in siliques but not in flower buds.</text>
</comment>
<comment type="developmental stage">
    <text evidence="4">Expression restricted to early to mid-stage of silique development.</text>
</comment>
<comment type="miscellaneous">
    <text>The PMEI region may act as an autoinhibitory domain and prevent untimely PME activity during transport.</text>
</comment>
<comment type="similarity">
    <text evidence="5">In the N-terminal section; belongs to the PMEI family.</text>
</comment>
<comment type="similarity">
    <text evidence="5">In the C-terminal section; belongs to the pectinesterase family.</text>
</comment>